<organism>
    <name type="scientific">Sodalis glossinidius (strain morsitans)</name>
    <dbReference type="NCBI Taxonomy" id="343509"/>
    <lineage>
        <taxon>Bacteria</taxon>
        <taxon>Pseudomonadati</taxon>
        <taxon>Pseudomonadota</taxon>
        <taxon>Gammaproteobacteria</taxon>
        <taxon>Enterobacterales</taxon>
        <taxon>Bruguierivoracaceae</taxon>
        <taxon>Sodalis</taxon>
    </lineage>
</organism>
<name>HIS8_SODGM</name>
<accession>Q2NTX2</accession>
<keyword id="KW-0028">Amino-acid biosynthesis</keyword>
<keyword id="KW-0032">Aminotransferase</keyword>
<keyword id="KW-0368">Histidine biosynthesis</keyword>
<keyword id="KW-0663">Pyridoxal phosphate</keyword>
<keyword id="KW-0808">Transferase</keyword>
<feature type="chain" id="PRO_1000063502" description="Histidinol-phosphate aminotransferase">
    <location>
        <begin position="1"/>
        <end position="360"/>
    </location>
</feature>
<feature type="modified residue" description="N6-(pyridoxal phosphate)lysine" evidence="1">
    <location>
        <position position="211"/>
    </location>
</feature>
<protein>
    <recommendedName>
        <fullName evidence="1">Histidinol-phosphate aminotransferase</fullName>
        <ecNumber evidence="1">2.6.1.9</ecNumber>
    </recommendedName>
    <alternativeName>
        <fullName evidence="1">Imidazole acetol-phosphate transaminase</fullName>
    </alternativeName>
</protein>
<comment type="catalytic activity">
    <reaction evidence="1">
        <text>L-histidinol phosphate + 2-oxoglutarate = 3-(imidazol-4-yl)-2-oxopropyl phosphate + L-glutamate</text>
        <dbReference type="Rhea" id="RHEA:23744"/>
        <dbReference type="ChEBI" id="CHEBI:16810"/>
        <dbReference type="ChEBI" id="CHEBI:29985"/>
        <dbReference type="ChEBI" id="CHEBI:57766"/>
        <dbReference type="ChEBI" id="CHEBI:57980"/>
        <dbReference type="EC" id="2.6.1.9"/>
    </reaction>
</comment>
<comment type="cofactor">
    <cofactor evidence="1">
        <name>pyridoxal 5'-phosphate</name>
        <dbReference type="ChEBI" id="CHEBI:597326"/>
    </cofactor>
</comment>
<comment type="pathway">
    <text evidence="1">Amino-acid biosynthesis; L-histidine biosynthesis; L-histidine from 5-phospho-alpha-D-ribose 1-diphosphate: step 7/9.</text>
</comment>
<comment type="subunit">
    <text evidence="1">Homodimer.</text>
</comment>
<comment type="similarity">
    <text evidence="1">Belongs to the class-II pyridoxal-phosphate-dependent aminotransferase family. Histidinol-phosphate aminotransferase subfamily.</text>
</comment>
<sequence>MSIHHLARANVLALEPYLSARRLGGQGNIWLNANEYPLPPGYGLRGGNLNRYPACQPAGVINGYAAYAGVQPEQVVVCRGADEGIELLIRAFCEPGADAILFCPPTYGMYSVSAETFGIARRTVEARQDWQLDLQAIRARLDGVKLVYICSPNNPTGNLIDLETLRAMLEMTHGRALLVVDEAYIDFCPQASVVNWLAEYPHLVILRTLSKAFALAGLRCGFVLANVEVIQLLLKVIAPYPLALPVADIAEQALSDEGLRQMRTRVAEINTNRETLAHGLADCPCICAVYPSVSNYLLVRCDPAYRVFKTLWDQGTILRDQSKQPGLADCLRITIGTLAECQSVIAVLRALKPSSSKESL</sequence>
<reference key="1">
    <citation type="journal article" date="2006" name="Genome Res.">
        <title>Massive genome erosion and functional adaptations provide insights into the symbiotic lifestyle of Sodalis glossinidius in the tsetse host.</title>
        <authorList>
            <person name="Toh H."/>
            <person name="Weiss B.L."/>
            <person name="Perkin S.A.H."/>
            <person name="Yamashita A."/>
            <person name="Oshima K."/>
            <person name="Hattori M."/>
            <person name="Aksoy S."/>
        </authorList>
    </citation>
    <scope>NUCLEOTIDE SEQUENCE [LARGE SCALE GENOMIC DNA]</scope>
    <source>
        <strain>morsitans</strain>
    </source>
</reference>
<proteinExistence type="inferred from homology"/>
<evidence type="ECO:0000255" key="1">
    <source>
        <dbReference type="HAMAP-Rule" id="MF_01023"/>
    </source>
</evidence>
<dbReference type="EC" id="2.6.1.9" evidence="1"/>
<dbReference type="EMBL" id="AP008232">
    <property type="protein sequence ID" value="BAE74403.1"/>
    <property type="molecule type" value="Genomic_DNA"/>
</dbReference>
<dbReference type="RefSeq" id="WP_011410963.1">
    <property type="nucleotide sequence ID" value="NC_007712.1"/>
</dbReference>
<dbReference type="SMR" id="Q2NTX2"/>
<dbReference type="STRING" id="343509.SG1128"/>
<dbReference type="KEGG" id="sgl:SG1128"/>
<dbReference type="eggNOG" id="COG0079">
    <property type="taxonomic scope" value="Bacteria"/>
</dbReference>
<dbReference type="HOGENOM" id="CLU_017584_3_1_6"/>
<dbReference type="OrthoDB" id="9813612at2"/>
<dbReference type="BioCyc" id="SGLO343509:SGP1_RS09665-MONOMER"/>
<dbReference type="UniPathway" id="UPA00031">
    <property type="reaction ID" value="UER00012"/>
</dbReference>
<dbReference type="Proteomes" id="UP000001932">
    <property type="component" value="Chromosome"/>
</dbReference>
<dbReference type="GO" id="GO:0004400">
    <property type="term" value="F:histidinol-phosphate transaminase activity"/>
    <property type="evidence" value="ECO:0007669"/>
    <property type="project" value="UniProtKB-UniRule"/>
</dbReference>
<dbReference type="GO" id="GO:0030170">
    <property type="term" value="F:pyridoxal phosphate binding"/>
    <property type="evidence" value="ECO:0007669"/>
    <property type="project" value="InterPro"/>
</dbReference>
<dbReference type="GO" id="GO:0000105">
    <property type="term" value="P:L-histidine biosynthetic process"/>
    <property type="evidence" value="ECO:0007669"/>
    <property type="project" value="UniProtKB-UniRule"/>
</dbReference>
<dbReference type="CDD" id="cd00609">
    <property type="entry name" value="AAT_like"/>
    <property type="match status" value="1"/>
</dbReference>
<dbReference type="Gene3D" id="3.90.1150.10">
    <property type="entry name" value="Aspartate Aminotransferase, domain 1"/>
    <property type="match status" value="1"/>
</dbReference>
<dbReference type="Gene3D" id="3.40.640.10">
    <property type="entry name" value="Type I PLP-dependent aspartate aminotransferase-like (Major domain)"/>
    <property type="match status" value="1"/>
</dbReference>
<dbReference type="HAMAP" id="MF_01023">
    <property type="entry name" value="HisC_aminotrans_2"/>
    <property type="match status" value="1"/>
</dbReference>
<dbReference type="InterPro" id="IPR001917">
    <property type="entry name" value="Aminotrans_II_pyridoxalP_BS"/>
</dbReference>
<dbReference type="InterPro" id="IPR004839">
    <property type="entry name" value="Aminotransferase_I/II_large"/>
</dbReference>
<dbReference type="InterPro" id="IPR005861">
    <property type="entry name" value="HisP_aminotrans"/>
</dbReference>
<dbReference type="InterPro" id="IPR015424">
    <property type="entry name" value="PyrdxlP-dep_Trfase"/>
</dbReference>
<dbReference type="InterPro" id="IPR015421">
    <property type="entry name" value="PyrdxlP-dep_Trfase_major"/>
</dbReference>
<dbReference type="InterPro" id="IPR015422">
    <property type="entry name" value="PyrdxlP-dep_Trfase_small"/>
</dbReference>
<dbReference type="NCBIfam" id="TIGR01141">
    <property type="entry name" value="hisC"/>
    <property type="match status" value="1"/>
</dbReference>
<dbReference type="PANTHER" id="PTHR42885:SF2">
    <property type="entry name" value="HISTIDINOL-PHOSPHATE AMINOTRANSFERASE"/>
    <property type="match status" value="1"/>
</dbReference>
<dbReference type="PANTHER" id="PTHR42885">
    <property type="entry name" value="HISTIDINOL-PHOSPHATE AMINOTRANSFERASE-RELATED"/>
    <property type="match status" value="1"/>
</dbReference>
<dbReference type="Pfam" id="PF00155">
    <property type="entry name" value="Aminotran_1_2"/>
    <property type="match status" value="1"/>
</dbReference>
<dbReference type="SUPFAM" id="SSF53383">
    <property type="entry name" value="PLP-dependent transferases"/>
    <property type="match status" value="1"/>
</dbReference>
<dbReference type="PROSITE" id="PS00599">
    <property type="entry name" value="AA_TRANSFER_CLASS_2"/>
    <property type="match status" value="1"/>
</dbReference>
<gene>
    <name evidence="1" type="primary">hisC</name>
    <name type="ordered locus">SG1128</name>
</gene>